<gene>
    <name type="primary">cmas</name>
</gene>
<organism>
    <name type="scientific">Oncorhynchus mykiss</name>
    <name type="common">Rainbow trout</name>
    <name type="synonym">Salmo gairdneri</name>
    <dbReference type="NCBI Taxonomy" id="8022"/>
    <lineage>
        <taxon>Eukaryota</taxon>
        <taxon>Metazoa</taxon>
        <taxon>Chordata</taxon>
        <taxon>Craniata</taxon>
        <taxon>Vertebrata</taxon>
        <taxon>Euteleostomi</taxon>
        <taxon>Actinopterygii</taxon>
        <taxon>Neopterygii</taxon>
        <taxon>Teleostei</taxon>
        <taxon>Protacanthopterygii</taxon>
        <taxon>Salmoniformes</taxon>
        <taxon>Salmonidae</taxon>
        <taxon>Salmoninae</taxon>
        <taxon>Oncorhynchus</taxon>
    </lineage>
</organism>
<feature type="chain" id="PRO_0000213202" description="N-acylneuraminate cytidylyltransferase">
    <location>
        <begin position="1"/>
        <end position="432"/>
    </location>
</feature>
<feature type="active site" evidence="1">
    <location>
        <position position="188"/>
    </location>
</feature>
<feature type="binding site" evidence="1">
    <location>
        <position position="39"/>
    </location>
    <ligand>
        <name>substrate</name>
    </ligand>
</feature>
<feature type="binding site" evidence="1">
    <location>
        <position position="49"/>
    </location>
    <ligand>
        <name>substrate</name>
    </ligand>
</feature>
<feature type="binding site" evidence="1">
    <location>
        <position position="98"/>
    </location>
    <ligand>
        <name>substrate</name>
    </ligand>
</feature>
<feature type="binding site" evidence="1">
    <location>
        <position position="107"/>
    </location>
    <ligand>
        <name>substrate</name>
    </ligand>
</feature>
<feature type="binding site" evidence="1">
    <location>
        <position position="109"/>
    </location>
    <ligand>
        <name>substrate</name>
    </ligand>
</feature>
<feature type="binding site" evidence="1">
    <location>
        <position position="130"/>
    </location>
    <ligand>
        <name>substrate</name>
    </ligand>
</feature>
<accession>Q90WG6</accession>
<comment type="function">
    <text>Catalyzes the activation of N-acetylneuraminic acid (NeuNAc) to cytidine 5'-monophosphate N-acetylneuraminic acid (CMP-NeuNAc), a substrate required for the addition of sialic acid.</text>
</comment>
<comment type="catalytic activity">
    <reaction evidence="2">
        <text>an N-acylneuraminate + CTP = a CMP-N-acyl-beta-neuraminate + diphosphate</text>
        <dbReference type="Rhea" id="RHEA:11344"/>
        <dbReference type="ChEBI" id="CHEBI:33019"/>
        <dbReference type="ChEBI" id="CHEBI:37563"/>
        <dbReference type="ChEBI" id="CHEBI:60073"/>
        <dbReference type="ChEBI" id="CHEBI:68671"/>
        <dbReference type="EC" id="2.7.7.43"/>
    </reaction>
</comment>
<comment type="pathway">
    <text>Amino-sugar metabolism; N-acetylneuraminate metabolism.</text>
</comment>
<comment type="subunit">
    <text evidence="1">Homotetramer; the active enzyme is formed by a dimer of dimers.</text>
</comment>
<comment type="subcellular location">
    <subcellularLocation>
        <location evidence="4">Nucleus</location>
    </subcellularLocation>
</comment>
<comment type="tissue specificity">
    <text evidence="2">Expressed in testis, ovary and liver.</text>
</comment>
<comment type="similarity">
    <text evidence="3">Belongs to the CMP-NeuNAc synthase family.</text>
</comment>
<evidence type="ECO:0000250" key="1"/>
<evidence type="ECO:0000269" key="2">
    <source>
    </source>
</evidence>
<evidence type="ECO:0000305" key="3"/>
<evidence type="ECO:0000305" key="4">
    <source>
    </source>
</evidence>
<reference key="1">
    <citation type="journal article" date="2001" name="Glycobiology">
        <title>Molecular cloning of a unique CMP-sialic acid synthetase that effectively utilizes both deaminoneuraminic acid (KDN) and N-acetylneuraminic acid (Neu5Ac) as substrates.</title>
        <authorList>
            <person name="Nakata D."/>
            <person name="Muenster A.-K."/>
            <person name="Gerardy-Schahn R."/>
            <person name="Aoki N."/>
            <person name="Matsuda T."/>
            <person name="Kitajima K."/>
        </authorList>
    </citation>
    <scope>NUCLEOTIDE SEQUENCE [MRNA]</scope>
    <scope>ENZYME ACTIVITY</scope>
    <scope>SUBCELLULAR LOCATION</scope>
    <scope>TISSUE SPECIFICITY</scope>
    <source>
        <tissue>Testis</tissue>
    </source>
</reference>
<sequence length="432" mass="48242">MAAAKKRTQSDIEDVRDRKAKVIKDSGEKRHIAALILARGGSKGIPLKNIKVLAGVPLIGWVLRAAVDSKQFDSVWVSTDHDDIEKVAKTWGAQVHRRSPEVSKDSSSSLDTIQEFARLNPEVDVICHIQATSPCLHPFHLKEALEMITKQGFTSVFSVVRRHHFRWQEVKKGGSVATQPLNLDPCNRPRRQDWDGELCENGSFYIYTRATIERGLQGGKWAYYEMLPEYSVDIDVDIDWPVAEQRVLRFGYFGLDKPEVVRLLLCNVSGCLTDGRVLISVSGEEMVSVNTRDTMGIRMLQREGVEVILISSSEDLLTKALADNLSQRTGCEVRQLGKDIQGEVIAMMDDKDLDWKEVAYMGNDAPDVDCLNLAGLSAVPRDAPVVAINAAKYSCHSAAGLGAVREFSEHILLLKKKAKSQMEQDRIHRNTF</sequence>
<proteinExistence type="evidence at transcript level"/>
<dbReference type="EC" id="2.7.7.43"/>
<dbReference type="EMBL" id="AB027414">
    <property type="protein sequence ID" value="BAB47150.1"/>
    <property type="molecule type" value="mRNA"/>
</dbReference>
<dbReference type="RefSeq" id="NP_001117662.1">
    <property type="nucleotide sequence ID" value="NM_001124190.1"/>
</dbReference>
<dbReference type="SMR" id="Q90WG6"/>
<dbReference type="GeneID" id="100135794"/>
<dbReference type="KEGG" id="ag:BAB47150"/>
<dbReference type="KEGG" id="omy:100135794"/>
<dbReference type="CTD" id="55907"/>
<dbReference type="OrthoDB" id="10262032at2759"/>
<dbReference type="BioCyc" id="MetaCyc:MONOMER-14551"/>
<dbReference type="BRENDA" id="2.7.7.43">
    <property type="organism ID" value="4402"/>
</dbReference>
<dbReference type="BRENDA" id="2.7.7.92">
    <property type="organism ID" value="4402"/>
</dbReference>
<dbReference type="SABIO-RK" id="Q90WG6"/>
<dbReference type="UniPathway" id="UPA00628"/>
<dbReference type="Proteomes" id="UP000694395">
    <property type="component" value="Unplaced"/>
</dbReference>
<dbReference type="GO" id="GO:0005634">
    <property type="term" value="C:nucleus"/>
    <property type="evidence" value="ECO:0000314"/>
    <property type="project" value="AgBase"/>
</dbReference>
<dbReference type="GO" id="GO:0090633">
    <property type="term" value="F:keto-deoxynonulosonic acid (KDN) cytidylyltransferase activity"/>
    <property type="evidence" value="ECO:0000314"/>
    <property type="project" value="AgBase"/>
</dbReference>
<dbReference type="GO" id="GO:0008781">
    <property type="term" value="F:N-acylneuraminate cytidylyltransferase activity"/>
    <property type="evidence" value="ECO:0000314"/>
    <property type="project" value="AgBase"/>
</dbReference>
<dbReference type="GO" id="GO:0090632">
    <property type="term" value="F:N-glycolylneuraminic acid (Neu5Gc) cytidylyltransferase activity"/>
    <property type="evidence" value="ECO:0000314"/>
    <property type="project" value="AgBase"/>
</dbReference>
<dbReference type="GO" id="GO:0006054">
    <property type="term" value="P:N-acetylneuraminate metabolic process"/>
    <property type="evidence" value="ECO:0007669"/>
    <property type="project" value="UniProtKB-UniPathway"/>
</dbReference>
<dbReference type="CDD" id="cd02513">
    <property type="entry name" value="CMP-NeuAc_Synthase"/>
    <property type="match status" value="1"/>
</dbReference>
<dbReference type="CDD" id="cd01630">
    <property type="entry name" value="HAD_KDO-like"/>
    <property type="match status" value="1"/>
</dbReference>
<dbReference type="FunFam" id="3.40.50.1000:FF:000082">
    <property type="entry name" value="N-acylneuraminate cytidylyltransferase A"/>
    <property type="match status" value="1"/>
</dbReference>
<dbReference type="FunFam" id="3.90.550.10:FF:000074">
    <property type="entry name" value="N-acylneuraminate cytidylyltransferase A"/>
    <property type="match status" value="1"/>
</dbReference>
<dbReference type="Gene3D" id="3.40.50.1000">
    <property type="entry name" value="HAD superfamily/HAD-like"/>
    <property type="match status" value="1"/>
</dbReference>
<dbReference type="Gene3D" id="3.90.550.10">
    <property type="entry name" value="Spore Coat Polysaccharide Biosynthesis Protein SpsA, Chain A"/>
    <property type="match status" value="1"/>
</dbReference>
<dbReference type="InterPro" id="IPR050793">
    <property type="entry name" value="CMP-NeuNAc_synthase"/>
</dbReference>
<dbReference type="InterPro" id="IPR003329">
    <property type="entry name" value="Cytidylyl_trans"/>
</dbReference>
<dbReference type="InterPro" id="IPR036412">
    <property type="entry name" value="HAD-like_sf"/>
</dbReference>
<dbReference type="InterPro" id="IPR023214">
    <property type="entry name" value="HAD_sf"/>
</dbReference>
<dbReference type="InterPro" id="IPR029044">
    <property type="entry name" value="Nucleotide-diphossugar_trans"/>
</dbReference>
<dbReference type="PANTHER" id="PTHR21485">
    <property type="entry name" value="HAD SUPERFAMILY MEMBERS CMAS AND KDSC"/>
    <property type="match status" value="1"/>
</dbReference>
<dbReference type="PANTHER" id="PTHR21485:SF3">
    <property type="entry name" value="N-ACYLNEURAMINATE CYTIDYLYLTRANSFERASE"/>
    <property type="match status" value="1"/>
</dbReference>
<dbReference type="Pfam" id="PF02348">
    <property type="entry name" value="CTP_transf_3"/>
    <property type="match status" value="1"/>
</dbReference>
<dbReference type="SUPFAM" id="SSF56784">
    <property type="entry name" value="HAD-like"/>
    <property type="match status" value="1"/>
</dbReference>
<dbReference type="SUPFAM" id="SSF53448">
    <property type="entry name" value="Nucleotide-diphospho-sugar transferases"/>
    <property type="match status" value="1"/>
</dbReference>
<keyword id="KW-0548">Nucleotidyltransferase</keyword>
<keyword id="KW-0539">Nucleus</keyword>
<keyword id="KW-0808">Transferase</keyword>
<protein>
    <recommendedName>
        <fullName>N-acylneuraminate cytidylyltransferase</fullName>
        <ecNumber>2.7.7.43</ecNumber>
    </recommendedName>
    <alternativeName>
        <fullName>CMP-N-acetylneuraminic acid synthase</fullName>
        <shortName>CMP-NeuNAc synthase</shortName>
    </alternativeName>
</protein>
<name>NEUA_ONCMY</name>